<gene>
    <name evidence="1" type="primary">mraY</name>
    <name type="ordered locus">BMA2554</name>
</gene>
<sequence length="389" mass="42882">MLLALAQWLQGDASFLRLFTYLTFRAVMATITALVIGLVCGPWVIRKLTQMKVGQAVRKDGPQTHLVKSGTPTMGGVLILIGIAVATLLWGDLTNRFIWIVMLVTFGFGVIGWVDDYRKVVYKDPRGMSSREKYFWQSVIGLFAAVYLAFSVSEANNVRVFDLFMAWVRSGLSMGLPARADLMLPFLKSISYPLGVWGFIALTYFVIVGASNAVNLTDGLDGLVIMPVVLVGASLGVFAYVMGSAVYSKYLLFPHIPGAGELLIFCSAMGGAGLAFLWYNTHPAQVFMGDVGALALGGALGTVAVIVRQEIVLFIMGGIFVAETLSVMLQVTWFKYTKKRYGEGRRIFKMAPLHHHFELSGWKETQVVVRFWIITLMLCLFGLSTLKLR</sequence>
<feature type="chain" id="PRO_0000108799" description="Phospho-N-acetylmuramoyl-pentapeptide-transferase">
    <location>
        <begin position="1"/>
        <end position="389"/>
    </location>
</feature>
<feature type="transmembrane region" description="Helical" evidence="1">
    <location>
        <begin position="25"/>
        <end position="45"/>
    </location>
</feature>
<feature type="transmembrane region" description="Helical" evidence="1">
    <location>
        <begin position="73"/>
        <end position="93"/>
    </location>
</feature>
<feature type="transmembrane region" description="Helical" evidence="1">
    <location>
        <begin position="97"/>
        <end position="117"/>
    </location>
</feature>
<feature type="transmembrane region" description="Helical" evidence="1">
    <location>
        <begin position="135"/>
        <end position="155"/>
    </location>
</feature>
<feature type="transmembrane region" description="Helical" evidence="1">
    <location>
        <begin position="190"/>
        <end position="210"/>
    </location>
</feature>
<feature type="transmembrane region" description="Helical" evidence="1">
    <location>
        <begin position="222"/>
        <end position="242"/>
    </location>
</feature>
<feature type="transmembrane region" description="Helical" evidence="1">
    <location>
        <begin position="258"/>
        <end position="278"/>
    </location>
</feature>
<feature type="transmembrane region" description="Helical" evidence="1">
    <location>
        <begin position="286"/>
        <end position="306"/>
    </location>
</feature>
<feature type="transmembrane region" description="Helical" evidence="1">
    <location>
        <begin position="311"/>
        <end position="331"/>
    </location>
</feature>
<feature type="transmembrane region" description="Helical" evidence="1">
    <location>
        <begin position="366"/>
        <end position="386"/>
    </location>
</feature>
<organism>
    <name type="scientific">Burkholderia mallei (strain ATCC 23344)</name>
    <dbReference type="NCBI Taxonomy" id="243160"/>
    <lineage>
        <taxon>Bacteria</taxon>
        <taxon>Pseudomonadati</taxon>
        <taxon>Pseudomonadota</taxon>
        <taxon>Betaproteobacteria</taxon>
        <taxon>Burkholderiales</taxon>
        <taxon>Burkholderiaceae</taxon>
        <taxon>Burkholderia</taxon>
        <taxon>pseudomallei group</taxon>
    </lineage>
</organism>
<evidence type="ECO:0000255" key="1">
    <source>
        <dbReference type="HAMAP-Rule" id="MF_00038"/>
    </source>
</evidence>
<keyword id="KW-0131">Cell cycle</keyword>
<keyword id="KW-0132">Cell division</keyword>
<keyword id="KW-0997">Cell inner membrane</keyword>
<keyword id="KW-1003">Cell membrane</keyword>
<keyword id="KW-0133">Cell shape</keyword>
<keyword id="KW-0961">Cell wall biogenesis/degradation</keyword>
<keyword id="KW-0460">Magnesium</keyword>
<keyword id="KW-0472">Membrane</keyword>
<keyword id="KW-0479">Metal-binding</keyword>
<keyword id="KW-0573">Peptidoglycan synthesis</keyword>
<keyword id="KW-1185">Reference proteome</keyword>
<keyword id="KW-0808">Transferase</keyword>
<keyword id="KW-0812">Transmembrane</keyword>
<keyword id="KW-1133">Transmembrane helix</keyword>
<accession>Q62GS4</accession>
<proteinExistence type="inferred from homology"/>
<dbReference type="EC" id="2.7.8.13" evidence="1"/>
<dbReference type="EMBL" id="CP000010">
    <property type="protein sequence ID" value="AAU50045.1"/>
    <property type="molecule type" value="Genomic_DNA"/>
</dbReference>
<dbReference type="RefSeq" id="WP_004194370.1">
    <property type="nucleotide sequence ID" value="NC_006348.1"/>
</dbReference>
<dbReference type="RefSeq" id="YP_104097.1">
    <property type="nucleotide sequence ID" value="NC_006348.1"/>
</dbReference>
<dbReference type="SMR" id="Q62GS4"/>
<dbReference type="GeneID" id="92980246"/>
<dbReference type="KEGG" id="bma:BMA2554"/>
<dbReference type="PATRIC" id="fig|243160.12.peg.2631"/>
<dbReference type="eggNOG" id="COG0472">
    <property type="taxonomic scope" value="Bacteria"/>
</dbReference>
<dbReference type="HOGENOM" id="CLU_023982_0_0_4"/>
<dbReference type="UniPathway" id="UPA00219"/>
<dbReference type="Proteomes" id="UP000006693">
    <property type="component" value="Chromosome 1"/>
</dbReference>
<dbReference type="GO" id="GO:0005886">
    <property type="term" value="C:plasma membrane"/>
    <property type="evidence" value="ECO:0007669"/>
    <property type="project" value="UniProtKB-SubCell"/>
</dbReference>
<dbReference type="GO" id="GO:0046872">
    <property type="term" value="F:metal ion binding"/>
    <property type="evidence" value="ECO:0007669"/>
    <property type="project" value="UniProtKB-KW"/>
</dbReference>
<dbReference type="GO" id="GO:0008963">
    <property type="term" value="F:phospho-N-acetylmuramoyl-pentapeptide-transferase activity"/>
    <property type="evidence" value="ECO:0007669"/>
    <property type="project" value="UniProtKB-UniRule"/>
</dbReference>
<dbReference type="GO" id="GO:0051992">
    <property type="term" value="F:UDP-N-acetylmuramoyl-L-alanyl-D-glutamyl-meso-2,6-diaminopimelyl-D-alanyl-D-alanine:undecaprenyl-phosphate transferase activity"/>
    <property type="evidence" value="ECO:0007669"/>
    <property type="project" value="RHEA"/>
</dbReference>
<dbReference type="GO" id="GO:0051301">
    <property type="term" value="P:cell division"/>
    <property type="evidence" value="ECO:0007669"/>
    <property type="project" value="UniProtKB-KW"/>
</dbReference>
<dbReference type="GO" id="GO:0071555">
    <property type="term" value="P:cell wall organization"/>
    <property type="evidence" value="ECO:0007669"/>
    <property type="project" value="UniProtKB-KW"/>
</dbReference>
<dbReference type="GO" id="GO:0009252">
    <property type="term" value="P:peptidoglycan biosynthetic process"/>
    <property type="evidence" value="ECO:0007669"/>
    <property type="project" value="UniProtKB-UniRule"/>
</dbReference>
<dbReference type="GO" id="GO:0008360">
    <property type="term" value="P:regulation of cell shape"/>
    <property type="evidence" value="ECO:0007669"/>
    <property type="project" value="UniProtKB-KW"/>
</dbReference>
<dbReference type="CDD" id="cd06852">
    <property type="entry name" value="GT_MraY"/>
    <property type="match status" value="1"/>
</dbReference>
<dbReference type="HAMAP" id="MF_00038">
    <property type="entry name" value="MraY"/>
    <property type="match status" value="1"/>
</dbReference>
<dbReference type="InterPro" id="IPR000715">
    <property type="entry name" value="Glycosyl_transferase_4"/>
</dbReference>
<dbReference type="InterPro" id="IPR003524">
    <property type="entry name" value="PNAcMuramoyl-5peptid_Trfase"/>
</dbReference>
<dbReference type="InterPro" id="IPR018480">
    <property type="entry name" value="PNAcMuramoyl-5peptid_Trfase_CS"/>
</dbReference>
<dbReference type="NCBIfam" id="TIGR00445">
    <property type="entry name" value="mraY"/>
    <property type="match status" value="1"/>
</dbReference>
<dbReference type="PANTHER" id="PTHR22926">
    <property type="entry name" value="PHOSPHO-N-ACETYLMURAMOYL-PENTAPEPTIDE-TRANSFERASE"/>
    <property type="match status" value="1"/>
</dbReference>
<dbReference type="PANTHER" id="PTHR22926:SF5">
    <property type="entry name" value="PHOSPHO-N-ACETYLMURAMOYL-PENTAPEPTIDE-TRANSFERASE HOMOLOG"/>
    <property type="match status" value="1"/>
</dbReference>
<dbReference type="Pfam" id="PF00953">
    <property type="entry name" value="Glycos_transf_4"/>
    <property type="match status" value="1"/>
</dbReference>
<dbReference type="Pfam" id="PF10555">
    <property type="entry name" value="MraY_sig1"/>
    <property type="match status" value="1"/>
</dbReference>
<dbReference type="PROSITE" id="PS01347">
    <property type="entry name" value="MRAY_1"/>
    <property type="match status" value="1"/>
</dbReference>
<dbReference type="PROSITE" id="PS01348">
    <property type="entry name" value="MRAY_2"/>
    <property type="match status" value="1"/>
</dbReference>
<name>MRAY_BURMA</name>
<protein>
    <recommendedName>
        <fullName evidence="1">Phospho-N-acetylmuramoyl-pentapeptide-transferase</fullName>
        <ecNumber evidence="1">2.7.8.13</ecNumber>
    </recommendedName>
    <alternativeName>
        <fullName evidence="1">UDP-MurNAc-pentapeptide phosphotransferase</fullName>
    </alternativeName>
</protein>
<comment type="function">
    <text evidence="1">Catalyzes the initial step of the lipid cycle reactions in the biosynthesis of the cell wall peptidoglycan: transfers peptidoglycan precursor phospho-MurNAc-pentapeptide from UDP-MurNAc-pentapeptide onto the lipid carrier undecaprenyl phosphate, yielding undecaprenyl-pyrophosphoryl-MurNAc-pentapeptide, known as lipid I.</text>
</comment>
<comment type="catalytic activity">
    <reaction evidence="1">
        <text>UDP-N-acetyl-alpha-D-muramoyl-L-alanyl-gamma-D-glutamyl-meso-2,6-diaminopimeloyl-D-alanyl-D-alanine + di-trans,octa-cis-undecaprenyl phosphate = di-trans,octa-cis-undecaprenyl diphospho-N-acetyl-alpha-D-muramoyl-L-alanyl-D-glutamyl-meso-2,6-diaminopimeloyl-D-alanyl-D-alanine + UMP</text>
        <dbReference type="Rhea" id="RHEA:28386"/>
        <dbReference type="ChEBI" id="CHEBI:57865"/>
        <dbReference type="ChEBI" id="CHEBI:60392"/>
        <dbReference type="ChEBI" id="CHEBI:61386"/>
        <dbReference type="ChEBI" id="CHEBI:61387"/>
        <dbReference type="EC" id="2.7.8.13"/>
    </reaction>
</comment>
<comment type="cofactor">
    <cofactor evidence="1">
        <name>Mg(2+)</name>
        <dbReference type="ChEBI" id="CHEBI:18420"/>
    </cofactor>
</comment>
<comment type="pathway">
    <text evidence="1">Cell wall biogenesis; peptidoglycan biosynthesis.</text>
</comment>
<comment type="subcellular location">
    <subcellularLocation>
        <location evidence="1">Cell inner membrane</location>
        <topology evidence="1">Multi-pass membrane protein</topology>
    </subcellularLocation>
</comment>
<comment type="similarity">
    <text evidence="1">Belongs to the glycosyltransferase 4 family. MraY subfamily.</text>
</comment>
<reference key="1">
    <citation type="journal article" date="2004" name="Proc. Natl. Acad. Sci. U.S.A.">
        <title>Structural flexibility in the Burkholderia mallei genome.</title>
        <authorList>
            <person name="Nierman W.C."/>
            <person name="DeShazer D."/>
            <person name="Kim H.S."/>
            <person name="Tettelin H."/>
            <person name="Nelson K.E."/>
            <person name="Feldblyum T.V."/>
            <person name="Ulrich R.L."/>
            <person name="Ronning C.M."/>
            <person name="Brinkac L.M."/>
            <person name="Daugherty S.C."/>
            <person name="Davidsen T.D."/>
            <person name="DeBoy R.T."/>
            <person name="Dimitrov G."/>
            <person name="Dodson R.J."/>
            <person name="Durkin A.S."/>
            <person name="Gwinn M.L."/>
            <person name="Haft D.H."/>
            <person name="Khouri H.M."/>
            <person name="Kolonay J.F."/>
            <person name="Madupu R."/>
            <person name="Mohammoud Y."/>
            <person name="Nelson W.C."/>
            <person name="Radune D."/>
            <person name="Romero C.M."/>
            <person name="Sarria S."/>
            <person name="Selengut J."/>
            <person name="Shamblin C."/>
            <person name="Sullivan S.A."/>
            <person name="White O."/>
            <person name="Yu Y."/>
            <person name="Zafar N."/>
            <person name="Zhou L."/>
            <person name="Fraser C.M."/>
        </authorList>
    </citation>
    <scope>NUCLEOTIDE SEQUENCE [LARGE SCALE GENOMIC DNA]</scope>
    <source>
        <strain>ATCC 23344</strain>
    </source>
</reference>